<evidence type="ECO:0000255" key="1">
    <source>
        <dbReference type="HAMAP-Rule" id="MF_00382"/>
    </source>
</evidence>
<evidence type="ECO:0000305" key="2"/>
<keyword id="KW-0687">Ribonucleoprotein</keyword>
<keyword id="KW-0689">Ribosomal protein</keyword>
<keyword id="KW-0694">RNA-binding</keyword>
<keyword id="KW-0699">rRNA-binding</keyword>
<proteinExistence type="inferred from homology"/>
<protein>
    <recommendedName>
        <fullName evidence="1">Large ribosomal subunit protein bL20</fullName>
    </recommendedName>
    <alternativeName>
        <fullName evidence="2">50S ribosomal protein L20</fullName>
    </alternativeName>
</protein>
<feature type="chain" id="PRO_0000243738" description="Large ribosomal subunit protein bL20">
    <location>
        <begin position="1"/>
        <end position="118"/>
    </location>
</feature>
<sequence>MARVKRGVVARARHKKILKQAKGYYGARSRVYRVAFQAVIKAGQYAYRDRRQKKRQFRQLWIARINAAARQNGISYSRFINGLKKASIEIDRKILADIAVFDKVAFAALADKAKGDLV</sequence>
<accession>Q2NT29</accession>
<reference key="1">
    <citation type="journal article" date="2006" name="Genome Res.">
        <title>Massive genome erosion and functional adaptations provide insights into the symbiotic lifestyle of Sodalis glossinidius in the tsetse host.</title>
        <authorList>
            <person name="Toh H."/>
            <person name="Weiss B.L."/>
            <person name="Perkin S.A.H."/>
            <person name="Yamashita A."/>
            <person name="Oshima K."/>
            <person name="Hattori M."/>
            <person name="Aksoy S."/>
        </authorList>
    </citation>
    <scope>NUCLEOTIDE SEQUENCE [LARGE SCALE GENOMIC DNA]</scope>
    <source>
        <strain>morsitans</strain>
    </source>
</reference>
<gene>
    <name evidence="1" type="primary">rplT</name>
    <name type="ordered locus">SG1421</name>
</gene>
<comment type="function">
    <text evidence="1">Binds directly to 23S ribosomal RNA and is necessary for the in vitro assembly process of the 50S ribosomal subunit. It is not involved in the protein synthesizing functions of that subunit.</text>
</comment>
<comment type="similarity">
    <text evidence="1">Belongs to the bacterial ribosomal protein bL20 family.</text>
</comment>
<dbReference type="EMBL" id="AP008232">
    <property type="protein sequence ID" value="BAE74696.1"/>
    <property type="molecule type" value="Genomic_DNA"/>
</dbReference>
<dbReference type="RefSeq" id="WP_011411241.1">
    <property type="nucleotide sequence ID" value="NC_007712.1"/>
</dbReference>
<dbReference type="SMR" id="Q2NT29"/>
<dbReference type="STRING" id="343509.SG1421"/>
<dbReference type="KEGG" id="sgl:SG1421"/>
<dbReference type="eggNOG" id="COG0292">
    <property type="taxonomic scope" value="Bacteria"/>
</dbReference>
<dbReference type="HOGENOM" id="CLU_123265_0_1_6"/>
<dbReference type="OrthoDB" id="9808966at2"/>
<dbReference type="BioCyc" id="SGLO343509:SGP1_RS12605-MONOMER"/>
<dbReference type="Proteomes" id="UP000001932">
    <property type="component" value="Chromosome"/>
</dbReference>
<dbReference type="GO" id="GO:1990904">
    <property type="term" value="C:ribonucleoprotein complex"/>
    <property type="evidence" value="ECO:0007669"/>
    <property type="project" value="UniProtKB-KW"/>
</dbReference>
<dbReference type="GO" id="GO:0005840">
    <property type="term" value="C:ribosome"/>
    <property type="evidence" value="ECO:0007669"/>
    <property type="project" value="UniProtKB-KW"/>
</dbReference>
<dbReference type="GO" id="GO:0019843">
    <property type="term" value="F:rRNA binding"/>
    <property type="evidence" value="ECO:0007669"/>
    <property type="project" value="UniProtKB-UniRule"/>
</dbReference>
<dbReference type="GO" id="GO:0003735">
    <property type="term" value="F:structural constituent of ribosome"/>
    <property type="evidence" value="ECO:0007669"/>
    <property type="project" value="InterPro"/>
</dbReference>
<dbReference type="GO" id="GO:0000027">
    <property type="term" value="P:ribosomal large subunit assembly"/>
    <property type="evidence" value="ECO:0007669"/>
    <property type="project" value="UniProtKB-UniRule"/>
</dbReference>
<dbReference type="GO" id="GO:0006412">
    <property type="term" value="P:translation"/>
    <property type="evidence" value="ECO:0007669"/>
    <property type="project" value="InterPro"/>
</dbReference>
<dbReference type="CDD" id="cd07026">
    <property type="entry name" value="Ribosomal_L20"/>
    <property type="match status" value="1"/>
</dbReference>
<dbReference type="FunFam" id="1.10.1900.20:FF:000001">
    <property type="entry name" value="50S ribosomal protein L20"/>
    <property type="match status" value="1"/>
</dbReference>
<dbReference type="Gene3D" id="6.10.160.10">
    <property type="match status" value="1"/>
</dbReference>
<dbReference type="Gene3D" id="1.10.1900.20">
    <property type="entry name" value="Ribosomal protein L20"/>
    <property type="match status" value="1"/>
</dbReference>
<dbReference type="HAMAP" id="MF_00382">
    <property type="entry name" value="Ribosomal_bL20"/>
    <property type="match status" value="1"/>
</dbReference>
<dbReference type="InterPro" id="IPR005813">
    <property type="entry name" value="Ribosomal_bL20"/>
</dbReference>
<dbReference type="InterPro" id="IPR049946">
    <property type="entry name" value="RIBOSOMAL_L20_CS"/>
</dbReference>
<dbReference type="InterPro" id="IPR035566">
    <property type="entry name" value="Ribosomal_protein_bL20_C"/>
</dbReference>
<dbReference type="NCBIfam" id="TIGR01032">
    <property type="entry name" value="rplT_bact"/>
    <property type="match status" value="1"/>
</dbReference>
<dbReference type="PANTHER" id="PTHR10986">
    <property type="entry name" value="39S RIBOSOMAL PROTEIN L20"/>
    <property type="match status" value="1"/>
</dbReference>
<dbReference type="Pfam" id="PF00453">
    <property type="entry name" value="Ribosomal_L20"/>
    <property type="match status" value="1"/>
</dbReference>
<dbReference type="PRINTS" id="PR00062">
    <property type="entry name" value="RIBOSOMALL20"/>
</dbReference>
<dbReference type="SUPFAM" id="SSF74731">
    <property type="entry name" value="Ribosomal protein L20"/>
    <property type="match status" value="1"/>
</dbReference>
<dbReference type="PROSITE" id="PS00937">
    <property type="entry name" value="RIBOSOMAL_L20"/>
    <property type="match status" value="1"/>
</dbReference>
<name>RL20_SODGM</name>
<organism>
    <name type="scientific">Sodalis glossinidius (strain morsitans)</name>
    <dbReference type="NCBI Taxonomy" id="343509"/>
    <lineage>
        <taxon>Bacteria</taxon>
        <taxon>Pseudomonadati</taxon>
        <taxon>Pseudomonadota</taxon>
        <taxon>Gammaproteobacteria</taxon>
        <taxon>Enterobacterales</taxon>
        <taxon>Bruguierivoracaceae</taxon>
        <taxon>Sodalis</taxon>
    </lineage>
</organism>